<dbReference type="EMBL" id="AP009371">
    <property type="protein sequence ID" value="BAF50209.1"/>
    <property type="molecule type" value="Genomic_DNA"/>
</dbReference>
<dbReference type="RefSeq" id="YP_001123385.1">
    <property type="nucleotide sequence ID" value="NC_009270.1"/>
</dbReference>
<dbReference type="SMR" id="A4QKK4"/>
<dbReference type="GeneID" id="4961734"/>
<dbReference type="GO" id="GO:0009706">
    <property type="term" value="C:chloroplast inner membrane"/>
    <property type="evidence" value="ECO:0007669"/>
    <property type="project" value="UniProtKB-SubCell"/>
</dbReference>
<dbReference type="GO" id="GO:0015297">
    <property type="term" value="F:antiporter activity"/>
    <property type="evidence" value="ECO:0007669"/>
    <property type="project" value="UniProtKB-KW"/>
</dbReference>
<dbReference type="GO" id="GO:0015078">
    <property type="term" value="F:proton transmembrane transporter activity"/>
    <property type="evidence" value="ECO:0007669"/>
    <property type="project" value="UniProtKB-UniRule"/>
</dbReference>
<dbReference type="GO" id="GO:0006813">
    <property type="term" value="P:potassium ion transport"/>
    <property type="evidence" value="ECO:0007669"/>
    <property type="project" value="UniProtKB-UniRule"/>
</dbReference>
<dbReference type="HAMAP" id="MF_01308">
    <property type="entry name" value="CemA_PxcA"/>
    <property type="match status" value="1"/>
</dbReference>
<dbReference type="InterPro" id="IPR004282">
    <property type="entry name" value="CemA"/>
</dbReference>
<dbReference type="PANTHER" id="PTHR33650:SF2">
    <property type="entry name" value="CHLOROPLAST ENVELOPE MEMBRANE PROTEIN"/>
    <property type="match status" value="1"/>
</dbReference>
<dbReference type="PANTHER" id="PTHR33650">
    <property type="entry name" value="CHLOROPLAST ENVELOPE MEMBRANE PROTEIN-RELATED"/>
    <property type="match status" value="1"/>
</dbReference>
<dbReference type="Pfam" id="PF03040">
    <property type="entry name" value="CemA"/>
    <property type="match status" value="1"/>
</dbReference>
<protein>
    <recommendedName>
        <fullName evidence="1">Potassium/proton antiporter CemA</fullName>
    </recommendedName>
    <alternativeName>
        <fullName evidence="1">Chloroplast envelope membrane protein A</fullName>
        <shortName evidence="1">CemA</shortName>
    </alternativeName>
</protein>
<reference key="1">
    <citation type="submission" date="2007-03" db="EMBL/GenBank/DDBJ databases">
        <title>Sequencing analysis of Capsella bursa-pastoris JO22 chloroplast DNA.</title>
        <authorList>
            <person name="Hosouchi T."/>
            <person name="Tsuruoka H."/>
            <person name="Kotani H."/>
        </authorList>
    </citation>
    <scope>NUCLEOTIDE SEQUENCE [LARGE SCALE GENOMIC DNA]</scope>
</reference>
<proteinExistence type="inferred from homology"/>
<comment type="function">
    <text evidence="1">Contributes to K(+)/H(+) antiport activity by supporting proton efflux to control proton extrusion and homeostasis in chloroplasts in a light-dependent manner to modulate photosynthesis. Prevents excessive induction of non-photochemical quenching (NPQ) under continuous-light conditions. Indirectly promotes efficient inorganic carbon uptake into chloroplasts.</text>
</comment>
<comment type="catalytic activity">
    <reaction evidence="1">
        <text>K(+)(in) + H(+)(out) = K(+)(out) + H(+)(in)</text>
        <dbReference type="Rhea" id="RHEA:29467"/>
        <dbReference type="ChEBI" id="CHEBI:15378"/>
        <dbReference type="ChEBI" id="CHEBI:29103"/>
    </reaction>
</comment>
<comment type="subcellular location">
    <subcellularLocation>
        <location evidence="1">Plastid</location>
        <location evidence="1">Chloroplast inner membrane</location>
        <topology evidence="1">Multi-pass membrane protein</topology>
    </subcellularLocation>
</comment>
<comment type="similarity">
    <text evidence="1 2">Belongs to the CemA family.</text>
</comment>
<name>CEMA_CAPBU</name>
<feature type="chain" id="PRO_0000293513" description="Potassium/proton antiporter CemA">
    <location>
        <begin position="1"/>
        <end position="229"/>
    </location>
</feature>
<feature type="transmembrane region" description="Helical" evidence="1">
    <location>
        <begin position="6"/>
        <end position="26"/>
    </location>
</feature>
<feature type="transmembrane region" description="Helical" evidence="1">
    <location>
        <begin position="107"/>
        <end position="127"/>
    </location>
</feature>
<feature type="transmembrane region" description="Helical" evidence="1">
    <location>
        <begin position="189"/>
        <end position="209"/>
    </location>
</feature>
<accession>A4QKK4</accession>
<geneLocation type="chloroplast"/>
<gene>
    <name evidence="1" type="primary">cemA</name>
    <name type="synonym">ycf10</name>
</gene>
<sequence>MAKKKAFIPFFYFTSIVFLPWLISLCCNKSLKTWITNWWNTRQCETFLNDIQEKSVLEKFIQLEELFQLDEMIKEYPETDLQQFRLGIHKETIQFIKIHNEYRIHTILHFSTNLISFVILSGYSFWGKEKLFILNSWVQEFLYNLSDTIKAFSILLLTDLCIGFHSPHGWELMIGYIYKDFGFAHYEQILSGLVSTFPVILDTIFKYWIFRYLNRVSPSLVVIYHAIND</sequence>
<organism>
    <name type="scientific">Capsella bursa-pastoris</name>
    <name type="common">Shepherd's purse</name>
    <name type="synonym">Thlaspi bursa-pastoris</name>
    <dbReference type="NCBI Taxonomy" id="3719"/>
    <lineage>
        <taxon>Eukaryota</taxon>
        <taxon>Viridiplantae</taxon>
        <taxon>Streptophyta</taxon>
        <taxon>Embryophyta</taxon>
        <taxon>Tracheophyta</taxon>
        <taxon>Spermatophyta</taxon>
        <taxon>Magnoliopsida</taxon>
        <taxon>eudicotyledons</taxon>
        <taxon>Gunneridae</taxon>
        <taxon>Pentapetalae</taxon>
        <taxon>rosids</taxon>
        <taxon>malvids</taxon>
        <taxon>Brassicales</taxon>
        <taxon>Brassicaceae</taxon>
        <taxon>Camelineae</taxon>
        <taxon>Capsella</taxon>
    </lineage>
</organism>
<evidence type="ECO:0000255" key="1">
    <source>
        <dbReference type="HAMAP-Rule" id="MF_01308"/>
    </source>
</evidence>
<evidence type="ECO:0000305" key="2"/>
<keyword id="KW-0050">Antiport</keyword>
<keyword id="KW-0150">Chloroplast</keyword>
<keyword id="KW-0375">Hydrogen ion transport</keyword>
<keyword id="KW-0406">Ion transport</keyword>
<keyword id="KW-0472">Membrane</keyword>
<keyword id="KW-0934">Plastid</keyword>
<keyword id="KW-1001">Plastid inner membrane</keyword>
<keyword id="KW-0630">Potassium</keyword>
<keyword id="KW-0633">Potassium transport</keyword>
<keyword id="KW-0812">Transmembrane</keyword>
<keyword id="KW-1133">Transmembrane helix</keyword>
<keyword id="KW-0813">Transport</keyword>